<dbReference type="EC" id="3.6.1.-" evidence="1"/>
<dbReference type="EC" id="3.6.1.22" evidence="1"/>
<dbReference type="EMBL" id="CP000964">
    <property type="protein sequence ID" value="ACI07309.1"/>
    <property type="molecule type" value="Genomic_DNA"/>
</dbReference>
<dbReference type="SMR" id="B5XYE2"/>
<dbReference type="KEGG" id="kpe:KPK_5296"/>
<dbReference type="HOGENOM" id="CLU_037162_0_1_6"/>
<dbReference type="Proteomes" id="UP000001734">
    <property type="component" value="Chromosome"/>
</dbReference>
<dbReference type="GO" id="GO:0005829">
    <property type="term" value="C:cytosol"/>
    <property type="evidence" value="ECO:0007669"/>
    <property type="project" value="TreeGrafter"/>
</dbReference>
<dbReference type="GO" id="GO:0000287">
    <property type="term" value="F:magnesium ion binding"/>
    <property type="evidence" value="ECO:0007669"/>
    <property type="project" value="UniProtKB-UniRule"/>
</dbReference>
<dbReference type="GO" id="GO:0030145">
    <property type="term" value="F:manganese ion binding"/>
    <property type="evidence" value="ECO:0007669"/>
    <property type="project" value="UniProtKB-UniRule"/>
</dbReference>
<dbReference type="GO" id="GO:0000210">
    <property type="term" value="F:NAD+ diphosphatase activity"/>
    <property type="evidence" value="ECO:0007669"/>
    <property type="project" value="UniProtKB-UniRule"/>
</dbReference>
<dbReference type="GO" id="GO:0035529">
    <property type="term" value="F:NADH pyrophosphatase activity"/>
    <property type="evidence" value="ECO:0007669"/>
    <property type="project" value="TreeGrafter"/>
</dbReference>
<dbReference type="GO" id="GO:0110153">
    <property type="term" value="F:RNA NAD-cap (NMN-forming) hydrolase activity"/>
    <property type="evidence" value="ECO:0007669"/>
    <property type="project" value="RHEA"/>
</dbReference>
<dbReference type="GO" id="GO:0008270">
    <property type="term" value="F:zinc ion binding"/>
    <property type="evidence" value="ECO:0007669"/>
    <property type="project" value="UniProtKB-UniRule"/>
</dbReference>
<dbReference type="GO" id="GO:0019677">
    <property type="term" value="P:NAD catabolic process"/>
    <property type="evidence" value="ECO:0007669"/>
    <property type="project" value="TreeGrafter"/>
</dbReference>
<dbReference type="GO" id="GO:0006734">
    <property type="term" value="P:NADH metabolic process"/>
    <property type="evidence" value="ECO:0007669"/>
    <property type="project" value="TreeGrafter"/>
</dbReference>
<dbReference type="GO" id="GO:0006742">
    <property type="term" value="P:NADP catabolic process"/>
    <property type="evidence" value="ECO:0007669"/>
    <property type="project" value="TreeGrafter"/>
</dbReference>
<dbReference type="CDD" id="cd03429">
    <property type="entry name" value="NUDIX_NADH_pyrophosphatase_Nudt13"/>
    <property type="match status" value="1"/>
</dbReference>
<dbReference type="FunFam" id="3.90.79.10:FF:000004">
    <property type="entry name" value="NADH pyrophosphatase"/>
    <property type="match status" value="1"/>
</dbReference>
<dbReference type="FunFam" id="3.90.79.20:FF:000001">
    <property type="entry name" value="NADH pyrophosphatase"/>
    <property type="match status" value="1"/>
</dbReference>
<dbReference type="Gene3D" id="3.90.79.20">
    <property type="match status" value="1"/>
</dbReference>
<dbReference type="Gene3D" id="3.90.79.10">
    <property type="entry name" value="Nucleoside Triphosphate Pyrophosphohydrolase"/>
    <property type="match status" value="1"/>
</dbReference>
<dbReference type="HAMAP" id="MF_00297">
    <property type="entry name" value="Nudix_NudC"/>
    <property type="match status" value="1"/>
</dbReference>
<dbReference type="InterPro" id="IPR050241">
    <property type="entry name" value="NAD-cap_RNA_hydrolase_NudC"/>
</dbReference>
<dbReference type="InterPro" id="IPR049734">
    <property type="entry name" value="NudC-like_C"/>
</dbReference>
<dbReference type="InterPro" id="IPR015797">
    <property type="entry name" value="NUDIX_hydrolase-like_dom_sf"/>
</dbReference>
<dbReference type="InterPro" id="IPR020084">
    <property type="entry name" value="NUDIX_hydrolase_CS"/>
</dbReference>
<dbReference type="InterPro" id="IPR000086">
    <property type="entry name" value="NUDIX_hydrolase_dom"/>
</dbReference>
<dbReference type="InterPro" id="IPR022925">
    <property type="entry name" value="RNA_Hydrolase_NudC"/>
</dbReference>
<dbReference type="InterPro" id="IPR015376">
    <property type="entry name" value="Znr_NADH_PPase"/>
</dbReference>
<dbReference type="NCBIfam" id="NF001299">
    <property type="entry name" value="PRK00241.1"/>
    <property type="match status" value="1"/>
</dbReference>
<dbReference type="PANTHER" id="PTHR42904:SF6">
    <property type="entry name" value="NAD-CAPPED RNA HYDROLASE NUDT12"/>
    <property type="match status" value="1"/>
</dbReference>
<dbReference type="PANTHER" id="PTHR42904">
    <property type="entry name" value="NUDIX HYDROLASE, NUDC SUBFAMILY"/>
    <property type="match status" value="1"/>
</dbReference>
<dbReference type="Pfam" id="PF00293">
    <property type="entry name" value="NUDIX"/>
    <property type="match status" value="1"/>
</dbReference>
<dbReference type="Pfam" id="PF09297">
    <property type="entry name" value="Zn_ribbon_NUD"/>
    <property type="match status" value="1"/>
</dbReference>
<dbReference type="SUPFAM" id="SSF55811">
    <property type="entry name" value="Nudix"/>
    <property type="match status" value="2"/>
</dbReference>
<dbReference type="PROSITE" id="PS51462">
    <property type="entry name" value="NUDIX"/>
    <property type="match status" value="1"/>
</dbReference>
<dbReference type="PROSITE" id="PS00893">
    <property type="entry name" value="NUDIX_BOX"/>
    <property type="match status" value="1"/>
</dbReference>
<accession>B5XYE2</accession>
<sequence length="257" mass="29522">MDRIIEKLDRGWWVVSHEQKLWLPGGELPHGEAVNFDLVGQHALHIGEWQGESVWMVRQDRRHDMGSLRQVLDQDPGLFQLAGRGIQLAEFYRSHKFCGYCGHPMHASKSEWAMLCSHCRERYYPQIAPCIIVAIRRDDSILLAQHTRHRNGVHTVLAGFVEVGETLEQAVAREVMEESGIKVKNLRYVTSQPWPFPQSLMTAFMADYADGDIVVDKKELLTADWYRYDNLPLLPPPGTVARRLIEDTVAMCRAEFE</sequence>
<gene>
    <name evidence="1" type="primary">nudC</name>
    <name type="ordered locus">KPK_5296</name>
</gene>
<name>NUDC_KLEP3</name>
<protein>
    <recommendedName>
        <fullName evidence="1">NAD-capped RNA hydrolase NudC</fullName>
        <shortName evidence="1">DeNADding enzyme NudC</shortName>
        <ecNumber evidence="1">3.6.1.-</ecNumber>
    </recommendedName>
    <alternativeName>
        <fullName evidence="1">NADH pyrophosphatase</fullName>
        <ecNumber evidence="1">3.6.1.22</ecNumber>
    </alternativeName>
</protein>
<evidence type="ECO:0000255" key="1">
    <source>
        <dbReference type="HAMAP-Rule" id="MF_00297"/>
    </source>
</evidence>
<reference key="1">
    <citation type="journal article" date="2008" name="PLoS Genet.">
        <title>Complete genome sequence of the N2-fixing broad host range endophyte Klebsiella pneumoniae 342 and virulence predictions verified in mice.</title>
        <authorList>
            <person name="Fouts D.E."/>
            <person name="Tyler H.L."/>
            <person name="DeBoy R.T."/>
            <person name="Daugherty S."/>
            <person name="Ren Q."/>
            <person name="Badger J.H."/>
            <person name="Durkin A.S."/>
            <person name="Huot H."/>
            <person name="Shrivastava S."/>
            <person name="Kothari S."/>
            <person name="Dodson R.J."/>
            <person name="Mohamoud Y."/>
            <person name="Khouri H."/>
            <person name="Roesch L.F.W."/>
            <person name="Krogfelt K.A."/>
            <person name="Struve C."/>
            <person name="Triplett E.W."/>
            <person name="Methe B.A."/>
        </authorList>
    </citation>
    <scope>NUCLEOTIDE SEQUENCE [LARGE SCALE GENOMIC DNA]</scope>
    <source>
        <strain>342</strain>
    </source>
</reference>
<feature type="chain" id="PRO_1000115244" description="NAD-capped RNA hydrolase NudC">
    <location>
        <begin position="1"/>
        <end position="257"/>
    </location>
</feature>
<feature type="domain" description="Nudix hydrolase" evidence="1">
    <location>
        <begin position="125"/>
        <end position="248"/>
    </location>
</feature>
<feature type="short sequence motif" description="Nudix box" evidence="1">
    <location>
        <begin position="159"/>
        <end position="180"/>
    </location>
</feature>
<feature type="binding site" evidence="1">
    <location>
        <position position="69"/>
    </location>
    <ligand>
        <name>substrate</name>
    </ligand>
</feature>
<feature type="binding site" evidence="1">
    <location>
        <position position="98"/>
    </location>
    <ligand>
        <name>Zn(2+)</name>
        <dbReference type="ChEBI" id="CHEBI:29105"/>
    </ligand>
</feature>
<feature type="binding site" evidence="1">
    <location>
        <position position="101"/>
    </location>
    <ligand>
        <name>Zn(2+)</name>
        <dbReference type="ChEBI" id="CHEBI:29105"/>
    </ligand>
</feature>
<feature type="binding site" evidence="1">
    <location>
        <position position="111"/>
    </location>
    <ligand>
        <name>substrate</name>
    </ligand>
</feature>
<feature type="binding site" evidence="1">
    <location>
        <position position="116"/>
    </location>
    <ligand>
        <name>Zn(2+)</name>
        <dbReference type="ChEBI" id="CHEBI:29105"/>
    </ligand>
</feature>
<feature type="binding site" evidence="1">
    <location>
        <position position="119"/>
    </location>
    <ligand>
        <name>Zn(2+)</name>
        <dbReference type="ChEBI" id="CHEBI:29105"/>
    </ligand>
</feature>
<feature type="binding site" evidence="1">
    <location>
        <position position="124"/>
    </location>
    <ligand>
        <name>substrate</name>
    </ligand>
</feature>
<feature type="binding site" evidence="1">
    <location>
        <position position="158"/>
    </location>
    <ligand>
        <name>a divalent metal cation</name>
        <dbReference type="ChEBI" id="CHEBI:60240"/>
        <label>1</label>
    </ligand>
</feature>
<feature type="binding site" evidence="1">
    <location>
        <position position="174"/>
    </location>
    <ligand>
        <name>a divalent metal cation</name>
        <dbReference type="ChEBI" id="CHEBI:60240"/>
        <label>2</label>
    </ligand>
</feature>
<feature type="binding site" evidence="1">
    <location>
        <position position="174"/>
    </location>
    <ligand>
        <name>a divalent metal cation</name>
        <dbReference type="ChEBI" id="CHEBI:60240"/>
        <label>3</label>
    </ligand>
</feature>
<feature type="binding site" evidence="1">
    <location>
        <position position="178"/>
    </location>
    <ligand>
        <name>a divalent metal cation</name>
        <dbReference type="ChEBI" id="CHEBI:60240"/>
        <label>1</label>
    </ligand>
</feature>
<feature type="binding site" evidence="1">
    <location>
        <position position="178"/>
    </location>
    <ligand>
        <name>a divalent metal cation</name>
        <dbReference type="ChEBI" id="CHEBI:60240"/>
        <label>3</label>
    </ligand>
</feature>
<feature type="binding site" evidence="1">
    <location>
        <begin position="192"/>
        <end position="199"/>
    </location>
    <ligand>
        <name>substrate</name>
    </ligand>
</feature>
<feature type="binding site" evidence="1">
    <location>
        <position position="219"/>
    </location>
    <ligand>
        <name>a divalent metal cation</name>
        <dbReference type="ChEBI" id="CHEBI:60240"/>
        <label>1</label>
    </ligand>
</feature>
<feature type="binding site" evidence="1">
    <location>
        <position position="219"/>
    </location>
    <ligand>
        <name>a divalent metal cation</name>
        <dbReference type="ChEBI" id="CHEBI:60240"/>
        <label>3</label>
    </ligand>
</feature>
<feature type="binding site" evidence="1">
    <location>
        <position position="241"/>
    </location>
    <ligand>
        <name>substrate</name>
    </ligand>
</feature>
<keyword id="KW-0378">Hydrolase</keyword>
<keyword id="KW-0460">Magnesium</keyword>
<keyword id="KW-0464">Manganese</keyword>
<keyword id="KW-0479">Metal-binding</keyword>
<keyword id="KW-0520">NAD</keyword>
<keyword id="KW-0862">Zinc</keyword>
<comment type="function">
    <text evidence="1">mRNA decapping enzyme that specifically removes the nicotinamide adenine dinucleotide (NAD) cap from a subset of mRNAs by hydrolyzing the diphosphate linkage to produce nicotinamide mononucleotide (NMN) and 5' monophosphate mRNA. The NAD-cap is present at the 5'-end of some mRNAs and stabilizes RNA against 5'-processing. Has preference for mRNAs with a 5'-end purine. Catalyzes the hydrolysis of a broad range of dinucleotide pyrophosphates.</text>
</comment>
<comment type="catalytic activity">
    <reaction evidence="1">
        <text>a 5'-end NAD(+)-phospho-ribonucleoside in mRNA + H2O = a 5'-end phospho-adenosine-phospho-ribonucleoside in mRNA + beta-nicotinamide D-ribonucleotide + 2 H(+)</text>
        <dbReference type="Rhea" id="RHEA:60876"/>
        <dbReference type="Rhea" id="RHEA-COMP:15698"/>
        <dbReference type="Rhea" id="RHEA-COMP:15719"/>
        <dbReference type="ChEBI" id="CHEBI:14649"/>
        <dbReference type="ChEBI" id="CHEBI:15377"/>
        <dbReference type="ChEBI" id="CHEBI:15378"/>
        <dbReference type="ChEBI" id="CHEBI:144029"/>
        <dbReference type="ChEBI" id="CHEBI:144051"/>
    </reaction>
    <physiologicalReaction direction="left-to-right" evidence="1">
        <dbReference type="Rhea" id="RHEA:60877"/>
    </physiologicalReaction>
</comment>
<comment type="catalytic activity">
    <reaction evidence="1">
        <text>NAD(+) + H2O = beta-nicotinamide D-ribonucleotide + AMP + 2 H(+)</text>
        <dbReference type="Rhea" id="RHEA:11800"/>
        <dbReference type="ChEBI" id="CHEBI:14649"/>
        <dbReference type="ChEBI" id="CHEBI:15377"/>
        <dbReference type="ChEBI" id="CHEBI:15378"/>
        <dbReference type="ChEBI" id="CHEBI:57540"/>
        <dbReference type="ChEBI" id="CHEBI:456215"/>
        <dbReference type="EC" id="3.6.1.22"/>
    </reaction>
</comment>
<comment type="catalytic activity">
    <reaction evidence="1">
        <text>NADH + H2O = reduced beta-nicotinamide D-ribonucleotide + AMP + 2 H(+)</text>
        <dbReference type="Rhea" id="RHEA:48868"/>
        <dbReference type="ChEBI" id="CHEBI:15377"/>
        <dbReference type="ChEBI" id="CHEBI:15378"/>
        <dbReference type="ChEBI" id="CHEBI:57945"/>
        <dbReference type="ChEBI" id="CHEBI:90832"/>
        <dbReference type="ChEBI" id="CHEBI:456215"/>
        <dbReference type="EC" id="3.6.1.22"/>
    </reaction>
</comment>
<comment type="cofactor">
    <cofactor evidence="1">
        <name>Mg(2+)</name>
        <dbReference type="ChEBI" id="CHEBI:18420"/>
    </cofactor>
    <cofactor evidence="1">
        <name>Mn(2+)</name>
        <dbReference type="ChEBI" id="CHEBI:29035"/>
    </cofactor>
    <text evidence="1">Divalent metal cations. Mg(2+) or Mn(2+).</text>
</comment>
<comment type="cofactor">
    <cofactor evidence="1">
        <name>Zn(2+)</name>
        <dbReference type="ChEBI" id="CHEBI:29105"/>
    </cofactor>
    <text evidence="1">Binds 1 zinc ion per subunit.</text>
</comment>
<comment type="subunit">
    <text evidence="1">Homodimer.</text>
</comment>
<comment type="similarity">
    <text evidence="1">Belongs to the Nudix hydrolase family. NudC subfamily.</text>
</comment>
<organism>
    <name type="scientific">Klebsiella pneumoniae (strain 342)</name>
    <dbReference type="NCBI Taxonomy" id="507522"/>
    <lineage>
        <taxon>Bacteria</taxon>
        <taxon>Pseudomonadati</taxon>
        <taxon>Pseudomonadota</taxon>
        <taxon>Gammaproteobacteria</taxon>
        <taxon>Enterobacterales</taxon>
        <taxon>Enterobacteriaceae</taxon>
        <taxon>Klebsiella/Raoultella group</taxon>
        <taxon>Klebsiella</taxon>
        <taxon>Klebsiella pneumoniae complex</taxon>
    </lineage>
</organism>
<proteinExistence type="inferred from homology"/>